<protein>
    <recommendedName>
        <fullName evidence="1">ATP-dependent protease subunit HslV</fullName>
        <ecNumber evidence="1">3.4.25.2</ecNumber>
    </recommendedName>
</protein>
<dbReference type="EC" id="3.4.25.2" evidence="1"/>
<dbReference type="EMBL" id="CP000469">
    <property type="protein sequence ID" value="ABK49917.1"/>
    <property type="molecule type" value="Genomic_DNA"/>
</dbReference>
<dbReference type="RefSeq" id="WP_011073856.1">
    <property type="nucleotide sequence ID" value="NC_008577.1"/>
</dbReference>
<dbReference type="SMR" id="A0L1J8"/>
<dbReference type="STRING" id="94122.Shewana3_3699"/>
<dbReference type="MEROPS" id="T01.006"/>
<dbReference type="GeneID" id="94729619"/>
<dbReference type="KEGG" id="shn:Shewana3_3699"/>
<dbReference type="eggNOG" id="COG5405">
    <property type="taxonomic scope" value="Bacteria"/>
</dbReference>
<dbReference type="HOGENOM" id="CLU_093872_1_0_6"/>
<dbReference type="OrthoDB" id="9804884at2"/>
<dbReference type="Proteomes" id="UP000002589">
    <property type="component" value="Chromosome"/>
</dbReference>
<dbReference type="GO" id="GO:0009376">
    <property type="term" value="C:HslUV protease complex"/>
    <property type="evidence" value="ECO:0007669"/>
    <property type="project" value="UniProtKB-UniRule"/>
</dbReference>
<dbReference type="GO" id="GO:0005839">
    <property type="term" value="C:proteasome core complex"/>
    <property type="evidence" value="ECO:0007669"/>
    <property type="project" value="InterPro"/>
</dbReference>
<dbReference type="GO" id="GO:0046872">
    <property type="term" value="F:metal ion binding"/>
    <property type="evidence" value="ECO:0007669"/>
    <property type="project" value="UniProtKB-KW"/>
</dbReference>
<dbReference type="GO" id="GO:0004298">
    <property type="term" value="F:threonine-type endopeptidase activity"/>
    <property type="evidence" value="ECO:0007669"/>
    <property type="project" value="UniProtKB-KW"/>
</dbReference>
<dbReference type="GO" id="GO:0051603">
    <property type="term" value="P:proteolysis involved in protein catabolic process"/>
    <property type="evidence" value="ECO:0007669"/>
    <property type="project" value="InterPro"/>
</dbReference>
<dbReference type="CDD" id="cd01913">
    <property type="entry name" value="protease_HslV"/>
    <property type="match status" value="1"/>
</dbReference>
<dbReference type="FunFam" id="3.60.20.10:FF:000002">
    <property type="entry name" value="ATP-dependent protease subunit HslV"/>
    <property type="match status" value="1"/>
</dbReference>
<dbReference type="Gene3D" id="3.60.20.10">
    <property type="entry name" value="Glutamine Phosphoribosylpyrophosphate, subunit 1, domain 1"/>
    <property type="match status" value="1"/>
</dbReference>
<dbReference type="HAMAP" id="MF_00248">
    <property type="entry name" value="HslV"/>
    <property type="match status" value="1"/>
</dbReference>
<dbReference type="InterPro" id="IPR022281">
    <property type="entry name" value="ATP-dep_Prtase_HsIV_su"/>
</dbReference>
<dbReference type="InterPro" id="IPR029055">
    <property type="entry name" value="Ntn_hydrolases_N"/>
</dbReference>
<dbReference type="InterPro" id="IPR001353">
    <property type="entry name" value="Proteasome_sua/b"/>
</dbReference>
<dbReference type="InterPro" id="IPR023333">
    <property type="entry name" value="Proteasome_suB-type"/>
</dbReference>
<dbReference type="NCBIfam" id="TIGR03692">
    <property type="entry name" value="ATP_dep_HslV"/>
    <property type="match status" value="1"/>
</dbReference>
<dbReference type="NCBIfam" id="NF003964">
    <property type="entry name" value="PRK05456.1"/>
    <property type="match status" value="1"/>
</dbReference>
<dbReference type="PANTHER" id="PTHR32194:SF0">
    <property type="entry name" value="ATP-DEPENDENT PROTEASE SUBUNIT HSLV"/>
    <property type="match status" value="1"/>
</dbReference>
<dbReference type="PANTHER" id="PTHR32194">
    <property type="entry name" value="METALLOPROTEASE TLDD"/>
    <property type="match status" value="1"/>
</dbReference>
<dbReference type="Pfam" id="PF00227">
    <property type="entry name" value="Proteasome"/>
    <property type="match status" value="1"/>
</dbReference>
<dbReference type="PIRSF" id="PIRSF039093">
    <property type="entry name" value="HslV"/>
    <property type="match status" value="1"/>
</dbReference>
<dbReference type="SUPFAM" id="SSF56235">
    <property type="entry name" value="N-terminal nucleophile aminohydrolases (Ntn hydrolases)"/>
    <property type="match status" value="1"/>
</dbReference>
<dbReference type="PROSITE" id="PS51476">
    <property type="entry name" value="PROTEASOME_BETA_2"/>
    <property type="match status" value="1"/>
</dbReference>
<organism>
    <name type="scientific">Shewanella sp. (strain ANA-3)</name>
    <dbReference type="NCBI Taxonomy" id="94122"/>
    <lineage>
        <taxon>Bacteria</taxon>
        <taxon>Pseudomonadati</taxon>
        <taxon>Pseudomonadota</taxon>
        <taxon>Gammaproteobacteria</taxon>
        <taxon>Alteromonadales</taxon>
        <taxon>Shewanellaceae</taxon>
        <taxon>Shewanella</taxon>
    </lineage>
</organism>
<evidence type="ECO:0000255" key="1">
    <source>
        <dbReference type="HAMAP-Rule" id="MF_00248"/>
    </source>
</evidence>
<gene>
    <name evidence="1" type="primary">hslV</name>
    <name type="ordered locus">Shewana3_3699</name>
</gene>
<keyword id="KW-0021">Allosteric enzyme</keyword>
<keyword id="KW-0963">Cytoplasm</keyword>
<keyword id="KW-0378">Hydrolase</keyword>
<keyword id="KW-0479">Metal-binding</keyword>
<keyword id="KW-0645">Protease</keyword>
<keyword id="KW-0915">Sodium</keyword>
<keyword id="KW-0888">Threonine protease</keyword>
<comment type="function">
    <text evidence="1">Protease subunit of a proteasome-like degradation complex believed to be a general protein degrading machinery.</text>
</comment>
<comment type="catalytic activity">
    <reaction evidence="1">
        <text>ATP-dependent cleavage of peptide bonds with broad specificity.</text>
        <dbReference type="EC" id="3.4.25.2"/>
    </reaction>
</comment>
<comment type="activity regulation">
    <text evidence="1">Allosterically activated by HslU binding.</text>
</comment>
<comment type="subunit">
    <text evidence="1">A double ring-shaped homohexamer of HslV is capped on each side by a ring-shaped HslU homohexamer. The assembly of the HslU/HslV complex is dependent on binding of ATP.</text>
</comment>
<comment type="subcellular location">
    <subcellularLocation>
        <location evidence="1">Cytoplasm</location>
    </subcellularLocation>
</comment>
<comment type="similarity">
    <text evidence="1">Belongs to the peptidase T1B family. HslV subfamily.</text>
</comment>
<name>HSLV_SHESA</name>
<reference key="1">
    <citation type="submission" date="2006-09" db="EMBL/GenBank/DDBJ databases">
        <title>Complete sequence of chromosome 1 of Shewanella sp. ANA-3.</title>
        <authorList>
            <person name="Copeland A."/>
            <person name="Lucas S."/>
            <person name="Lapidus A."/>
            <person name="Barry K."/>
            <person name="Detter J.C."/>
            <person name="Glavina del Rio T."/>
            <person name="Hammon N."/>
            <person name="Israni S."/>
            <person name="Dalin E."/>
            <person name="Tice H."/>
            <person name="Pitluck S."/>
            <person name="Chertkov O."/>
            <person name="Brettin T."/>
            <person name="Bruce D."/>
            <person name="Han C."/>
            <person name="Tapia R."/>
            <person name="Gilna P."/>
            <person name="Schmutz J."/>
            <person name="Larimer F."/>
            <person name="Land M."/>
            <person name="Hauser L."/>
            <person name="Kyrpides N."/>
            <person name="Kim E."/>
            <person name="Newman D."/>
            <person name="Salticov C."/>
            <person name="Konstantinidis K."/>
            <person name="Klappenback J."/>
            <person name="Tiedje J."/>
            <person name="Richardson P."/>
        </authorList>
    </citation>
    <scope>NUCLEOTIDE SEQUENCE [LARGE SCALE GENOMIC DNA]</scope>
    <source>
        <strain>ANA-3</strain>
    </source>
</reference>
<accession>A0L1J8</accession>
<proteinExistence type="inferred from homology"/>
<sequence>MTTIVSVRRNNQVVIAGDGQVSLGNTVMKGNAKKVRRLYHNKVLAGFAGGTADAFTLFERFESKLEMHQGHLLRSAVELAKDWRTDRMLRKLEAMLVVADAEASLIITGNGDVVQPEHDLVAIGSGGNYAQAAALALLQNTELSALEIAEKSLTIAGDICVFTNQFKTIEELNY</sequence>
<feature type="chain" id="PRO_1000012671" description="ATP-dependent protease subunit HslV">
    <location>
        <begin position="1"/>
        <end position="174"/>
    </location>
</feature>
<feature type="active site" evidence="1">
    <location>
        <position position="2"/>
    </location>
</feature>
<feature type="binding site" evidence="1">
    <location>
        <position position="157"/>
    </location>
    <ligand>
        <name>Na(+)</name>
        <dbReference type="ChEBI" id="CHEBI:29101"/>
    </ligand>
</feature>
<feature type="binding site" evidence="1">
    <location>
        <position position="160"/>
    </location>
    <ligand>
        <name>Na(+)</name>
        <dbReference type="ChEBI" id="CHEBI:29101"/>
    </ligand>
</feature>
<feature type="binding site" evidence="1">
    <location>
        <position position="163"/>
    </location>
    <ligand>
        <name>Na(+)</name>
        <dbReference type="ChEBI" id="CHEBI:29101"/>
    </ligand>
</feature>